<proteinExistence type="evidence at transcript level"/>
<comment type="function">
    <text evidence="1 3">May catalyze the cis-trans isomerization of proline imidic peptide bonds in oligopeptides thereby assisting the folding of proteins. May also function as a chaperone, playing a role in intracellular transport of proteins. May also have a protein ubiquitin ligase activity acting as an E3 ubiquitin protein ligase or as a ubiquitin-ubiquitin ligase promoting elongation of ubiquitin chains on proteins.</text>
</comment>
<comment type="catalytic activity">
    <reaction>
        <text>[protein]-peptidylproline (omega=180) = [protein]-peptidylproline (omega=0)</text>
        <dbReference type="Rhea" id="RHEA:16237"/>
        <dbReference type="Rhea" id="RHEA-COMP:10747"/>
        <dbReference type="Rhea" id="RHEA-COMP:10748"/>
        <dbReference type="ChEBI" id="CHEBI:83833"/>
        <dbReference type="ChEBI" id="CHEBI:83834"/>
        <dbReference type="EC" id="5.2.1.8"/>
    </reaction>
</comment>
<comment type="catalytic activity">
    <reaction evidence="3">
        <text>S-ubiquitinyl-[E2 ubiquitin-conjugating enzyme]-L-cysteine + [acceptor protein]-L-lysine = [E2 ubiquitin-conjugating enzyme]-L-cysteine + N(6)-ubiquitinyl-[acceptor protein]-L-lysine.</text>
        <dbReference type="EC" id="2.3.2.27"/>
    </reaction>
</comment>
<comment type="pathway">
    <text evidence="3">Protein modification; protein ubiquitination.</text>
</comment>
<comment type="subcellular location">
    <subcellularLocation>
        <location evidence="2 3">Nucleus</location>
    </subcellularLocation>
</comment>
<comment type="tissue specificity">
    <text evidence="6">Expressed in leaves, flower buds and stems. Lower levels of expression in roots.</text>
</comment>
<comment type="similarity">
    <text evidence="7">Belongs to the cyclophilin-type PPIase family. PPIL2 subfamily.</text>
</comment>
<keyword id="KW-0143">Chaperone</keyword>
<keyword id="KW-0413">Isomerase</keyword>
<keyword id="KW-0539">Nucleus</keyword>
<keyword id="KW-1185">Reference proteome</keyword>
<keyword id="KW-0697">Rotamase</keyword>
<keyword id="KW-0808">Transferase</keyword>
<keyword id="KW-0833">Ubl conjugation pathway</keyword>
<evidence type="ECO:0000250" key="1">
    <source>
        <dbReference type="UniProtKB" id="Q08752"/>
    </source>
</evidence>
<evidence type="ECO:0000250" key="2">
    <source>
        <dbReference type="UniProtKB" id="Q09928"/>
    </source>
</evidence>
<evidence type="ECO:0000250" key="3">
    <source>
        <dbReference type="UniProtKB" id="Q13356"/>
    </source>
</evidence>
<evidence type="ECO:0000255" key="4">
    <source>
        <dbReference type="PROSITE-ProRule" id="PRU00156"/>
    </source>
</evidence>
<evidence type="ECO:0000256" key="5">
    <source>
        <dbReference type="SAM" id="MobiDB-lite"/>
    </source>
</evidence>
<evidence type="ECO:0000269" key="6">
    <source>
    </source>
</evidence>
<evidence type="ECO:0000305" key="7"/>
<protein>
    <recommendedName>
        <fullName evidence="7">Peptidyl-prolyl cis-trans isomerase CYP65</fullName>
        <shortName>AtCYP65</shortName>
        <shortName>PPIase CYP65</shortName>
        <ecNumber evidence="3">2.3.2.27</ecNumber>
        <ecNumber evidence="1">5.2.1.8</ecNumber>
    </recommendedName>
    <alternativeName>
        <fullName>Cyclophilin-65</fullName>
    </alternativeName>
    <alternativeName>
        <fullName>Peptidyl-prolyl cis-trans isomerase-like 2</fullName>
    </alternativeName>
    <alternativeName>
        <fullName>Plant U-box protein 49</fullName>
    </alternativeName>
    <alternativeName>
        <fullName evidence="7">RING-type E3 ubiquitin transferase isomerase-like 2</fullName>
    </alternativeName>
    <alternativeName>
        <fullName>Rotamase</fullName>
    </alternativeName>
    <alternativeName>
        <fullName>U-box domain-containing protein 49</fullName>
    </alternativeName>
</protein>
<feature type="chain" id="PRO_0000322147" description="Peptidyl-prolyl cis-trans isomerase CYP65">
    <location>
        <begin position="1"/>
        <end position="595"/>
    </location>
</feature>
<feature type="domain" description="U-box">
    <location>
        <begin position="35"/>
        <end position="108"/>
    </location>
</feature>
<feature type="domain" description="PPIase cyclophilin-type" evidence="4">
    <location>
        <begin position="342"/>
        <end position="496"/>
    </location>
</feature>
<feature type="region of interest" description="Disordered" evidence="5">
    <location>
        <begin position="503"/>
        <end position="546"/>
    </location>
</feature>
<feature type="region of interest" description="Disordered" evidence="5">
    <location>
        <begin position="576"/>
        <end position="595"/>
    </location>
</feature>
<feature type="compositionally biased region" description="Basic and acidic residues" evidence="5">
    <location>
        <begin position="510"/>
        <end position="525"/>
    </location>
</feature>
<feature type="compositionally biased region" description="Polar residues" evidence="5">
    <location>
        <begin position="582"/>
        <end position="595"/>
    </location>
</feature>
<feature type="sequence conflict" description="In Ref. 4; AAL32594/AAM13295." evidence="7" ref="4">
    <original>P</original>
    <variation>H</variation>
    <location>
        <position position="77"/>
    </location>
</feature>
<accession>Q9FJX0</accession>
<accession>Q8W4J7</accession>
<dbReference type="EC" id="2.3.2.27" evidence="3"/>
<dbReference type="EC" id="5.2.1.8" evidence="1"/>
<dbReference type="EMBL" id="AY568528">
    <property type="protein sequence ID" value="AAS75311.1"/>
    <property type="molecule type" value="mRNA"/>
</dbReference>
<dbReference type="EMBL" id="AB013390">
    <property type="protein sequence ID" value="BAB08461.1"/>
    <property type="molecule type" value="Genomic_DNA"/>
</dbReference>
<dbReference type="EMBL" id="CP002688">
    <property type="protein sequence ID" value="AED98356.1"/>
    <property type="molecule type" value="Genomic_DNA"/>
</dbReference>
<dbReference type="EMBL" id="AY062106">
    <property type="protein sequence ID" value="AAL32981.1"/>
    <property type="molecule type" value="mRNA"/>
</dbReference>
<dbReference type="EMBL" id="AY062516">
    <property type="protein sequence ID" value="AAL32594.1"/>
    <property type="molecule type" value="mRNA"/>
</dbReference>
<dbReference type="EMBL" id="AY093296">
    <property type="protein sequence ID" value="AAM13295.1"/>
    <property type="molecule type" value="mRNA"/>
</dbReference>
<dbReference type="EMBL" id="BT001006">
    <property type="protein sequence ID" value="AAN46760.1"/>
    <property type="molecule type" value="mRNA"/>
</dbReference>
<dbReference type="RefSeq" id="NP_201554.1">
    <property type="nucleotide sequence ID" value="NM_126153.4"/>
</dbReference>
<dbReference type="SMR" id="Q9FJX0"/>
<dbReference type="BioGRID" id="22131">
    <property type="interactions" value="3"/>
</dbReference>
<dbReference type="FunCoup" id="Q9FJX0">
    <property type="interactions" value="4028"/>
</dbReference>
<dbReference type="IntAct" id="Q9FJX0">
    <property type="interactions" value="3"/>
</dbReference>
<dbReference type="STRING" id="3702.Q9FJX0"/>
<dbReference type="iPTMnet" id="Q9FJX0"/>
<dbReference type="PaxDb" id="3702-AT5G67530.1"/>
<dbReference type="ProteomicsDB" id="248733"/>
<dbReference type="EnsemblPlants" id="AT5G67530.1">
    <property type="protein sequence ID" value="AT5G67530.1"/>
    <property type="gene ID" value="AT5G67530"/>
</dbReference>
<dbReference type="GeneID" id="836889"/>
<dbReference type="Gramene" id="AT5G67530.1">
    <property type="protein sequence ID" value="AT5G67530.1"/>
    <property type="gene ID" value="AT5G67530"/>
</dbReference>
<dbReference type="KEGG" id="ath:AT5G67530"/>
<dbReference type="Araport" id="AT5G67530"/>
<dbReference type="TAIR" id="AT5G67530">
    <property type="gene designation" value="PUB49"/>
</dbReference>
<dbReference type="eggNOG" id="KOG0883">
    <property type="taxonomic scope" value="Eukaryota"/>
</dbReference>
<dbReference type="HOGENOM" id="CLU_012062_7_0_1"/>
<dbReference type="InParanoid" id="Q9FJX0"/>
<dbReference type="OMA" id="NFIKHCA"/>
<dbReference type="PhylomeDB" id="Q9FJX0"/>
<dbReference type="UniPathway" id="UPA00143"/>
<dbReference type="PRO" id="PR:Q9FJX0"/>
<dbReference type="Proteomes" id="UP000006548">
    <property type="component" value="Chromosome 5"/>
</dbReference>
<dbReference type="ExpressionAtlas" id="Q9FJX0">
    <property type="expression patterns" value="baseline and differential"/>
</dbReference>
<dbReference type="GO" id="GO:0005634">
    <property type="term" value="C:nucleus"/>
    <property type="evidence" value="ECO:0007669"/>
    <property type="project" value="UniProtKB-SubCell"/>
</dbReference>
<dbReference type="GO" id="GO:0003755">
    <property type="term" value="F:peptidyl-prolyl cis-trans isomerase activity"/>
    <property type="evidence" value="ECO:0007669"/>
    <property type="project" value="UniProtKB-KW"/>
</dbReference>
<dbReference type="GO" id="GO:0004842">
    <property type="term" value="F:ubiquitin-protein transferase activity"/>
    <property type="evidence" value="ECO:0007669"/>
    <property type="project" value="InterPro"/>
</dbReference>
<dbReference type="GO" id="GO:0006457">
    <property type="term" value="P:protein folding"/>
    <property type="evidence" value="ECO:0007669"/>
    <property type="project" value="InterPro"/>
</dbReference>
<dbReference type="GO" id="GO:0016567">
    <property type="term" value="P:protein ubiquitination"/>
    <property type="evidence" value="ECO:0007669"/>
    <property type="project" value="UniProtKB-UniPathway"/>
</dbReference>
<dbReference type="CDD" id="cd01923">
    <property type="entry name" value="cyclophilin_RING"/>
    <property type="match status" value="1"/>
</dbReference>
<dbReference type="CDD" id="cd16663">
    <property type="entry name" value="RING-Ubox_PPIL2"/>
    <property type="match status" value="1"/>
</dbReference>
<dbReference type="FunFam" id="3.30.40.10:FF:000079">
    <property type="entry name" value="Peptidyl-prolyl cis-trans isomerase 2"/>
    <property type="match status" value="1"/>
</dbReference>
<dbReference type="FunFam" id="2.40.100.10:FF:000014">
    <property type="entry name" value="Peptidyl-prolyl cis-trans isomerase cyp65"/>
    <property type="match status" value="1"/>
</dbReference>
<dbReference type="Gene3D" id="2.40.100.10">
    <property type="entry name" value="Cyclophilin-like"/>
    <property type="match status" value="1"/>
</dbReference>
<dbReference type="Gene3D" id="3.30.40.10">
    <property type="entry name" value="Zinc/RING finger domain, C3HC4 (zinc finger)"/>
    <property type="match status" value="1"/>
</dbReference>
<dbReference type="InterPro" id="IPR029000">
    <property type="entry name" value="Cyclophilin-like_dom_sf"/>
</dbReference>
<dbReference type="InterPro" id="IPR020892">
    <property type="entry name" value="Cyclophilin-type_PPIase_CS"/>
</dbReference>
<dbReference type="InterPro" id="IPR002130">
    <property type="entry name" value="Cyclophilin-type_PPIase_dom"/>
</dbReference>
<dbReference type="InterPro" id="IPR044666">
    <property type="entry name" value="Cyclophilin_A-like"/>
</dbReference>
<dbReference type="InterPro" id="IPR026951">
    <property type="entry name" value="PPIL2_U-box_dom"/>
</dbReference>
<dbReference type="InterPro" id="IPR003613">
    <property type="entry name" value="Ubox_domain"/>
</dbReference>
<dbReference type="InterPro" id="IPR013083">
    <property type="entry name" value="Znf_RING/FYVE/PHD"/>
</dbReference>
<dbReference type="PANTHER" id="PTHR45625">
    <property type="entry name" value="PEPTIDYL-PROLYL CIS-TRANS ISOMERASE-RELATED"/>
    <property type="match status" value="1"/>
</dbReference>
<dbReference type="PANTHER" id="PTHR45625:SF1">
    <property type="entry name" value="RING-TYPE E3 UBIQUITIN-PROTEIN LIGASE PPIL2"/>
    <property type="match status" value="1"/>
</dbReference>
<dbReference type="Pfam" id="PF00160">
    <property type="entry name" value="Pro_isomerase"/>
    <property type="match status" value="1"/>
</dbReference>
<dbReference type="PRINTS" id="PR00153">
    <property type="entry name" value="CSAPPISMRASE"/>
</dbReference>
<dbReference type="SMART" id="SM00504">
    <property type="entry name" value="Ubox"/>
    <property type="match status" value="1"/>
</dbReference>
<dbReference type="SUPFAM" id="SSF50891">
    <property type="entry name" value="Cyclophilin-like"/>
    <property type="match status" value="1"/>
</dbReference>
<dbReference type="SUPFAM" id="SSF57850">
    <property type="entry name" value="RING/U-box"/>
    <property type="match status" value="1"/>
</dbReference>
<dbReference type="PROSITE" id="PS00170">
    <property type="entry name" value="CSA_PPIASE_1"/>
    <property type="match status" value="1"/>
</dbReference>
<dbReference type="PROSITE" id="PS50072">
    <property type="entry name" value="CSA_PPIASE_2"/>
    <property type="match status" value="1"/>
</dbReference>
<dbReference type="PROSITE" id="PS51698">
    <property type="entry name" value="U_BOX"/>
    <property type="match status" value="1"/>
</dbReference>
<gene>
    <name type="primary">CYP65</name>
    <name type="synonym">PUB49</name>
    <name type="ordered locus">At5g67530</name>
    <name type="ORF">K9I9.9</name>
</gene>
<name>PPIL2_ARATH</name>
<organism>
    <name type="scientific">Arabidopsis thaliana</name>
    <name type="common">Mouse-ear cress</name>
    <dbReference type="NCBI Taxonomy" id="3702"/>
    <lineage>
        <taxon>Eukaryota</taxon>
        <taxon>Viridiplantae</taxon>
        <taxon>Streptophyta</taxon>
        <taxon>Embryophyta</taxon>
        <taxon>Tracheophyta</taxon>
        <taxon>Spermatophyta</taxon>
        <taxon>Magnoliopsida</taxon>
        <taxon>eudicotyledons</taxon>
        <taxon>Gunneridae</taxon>
        <taxon>Pentapetalae</taxon>
        <taxon>rosids</taxon>
        <taxon>malvids</taxon>
        <taxon>Brassicales</taxon>
        <taxon>Brassicaceae</taxon>
        <taxon>Camelineae</taxon>
        <taxon>Arabidopsis</taxon>
    </lineage>
</organism>
<sequence>MGKKQHSKDRMFITKTEWATEWGGAKSKENRTPFKSLPYYCCALTFLPFEDPVCTIDGSVFEITTIVPYIRKFGKHPVTGAPLKGEDLIPLIFHKNSEGEYHCPVLNKVFTEFTHIVAVKTTGNVFCYEAIKELNIKTKNWKELLTEEPFTRADLITIQNPNAVDGKVTVEFDHVKNGLKIDDEELKKMNSDPAYNINVSGDIKHMLADLGTDKAKEIALHGGGGNKARNERAAAIAAILESRSKIKEVSKAEQPKQTYSVVDAASASVFGRSADAAKAGSSDKTAARIAMHMAGDRTPVNSKMVKSRYSSGAASRSFTSSAFTPVTKNDFELIKVEKNPKKKGYVQFQTTHGDLNIELHCDIAPRACENFITLCERGYYNGVAFHRSIRNFMIQGGDPTGTGKGGESIWGKPFKDEPNSKLLHSGRGVVSMANSGPHTNGSQFFVLYKSATHLNYKHTVFGGVVGGLATLAAMENVPVDESDRPLEEIKIIEASVFVNPYTELDEEEEKEKAEKEKNEDKDIEKIGSWYSNPGSGTTEAGAGGGGVGKYLKAMSSTATKDTKGSLDSDISTIGVSKKRKTTASASTGFKDFSSW</sequence>
<reference key="1">
    <citation type="journal article" date="2004" name="Plant Physiol.">
        <title>The Arabidopsis cyclophilin gene family.</title>
        <authorList>
            <person name="Romano P.G.N."/>
            <person name="Horton P."/>
            <person name="Gray J.E."/>
        </authorList>
    </citation>
    <scope>NUCLEOTIDE SEQUENCE [MRNA]</scope>
    <scope>TISSUE SPECIFICITY</scope>
    <scope>GENE FAMILY</scope>
    <scope>NOMENCLATURE</scope>
</reference>
<reference key="2">
    <citation type="journal article" date="1998" name="DNA Res.">
        <title>Structural analysis of Arabidopsis thaliana chromosome 5. VI. Sequence features of the regions of 1,367,185 bp covered by 19 physically assigned P1 and TAC clones.</title>
        <authorList>
            <person name="Kotani H."/>
            <person name="Nakamura Y."/>
            <person name="Sato S."/>
            <person name="Asamizu E."/>
            <person name="Kaneko T."/>
            <person name="Miyajima N."/>
            <person name="Tabata S."/>
        </authorList>
    </citation>
    <scope>NUCLEOTIDE SEQUENCE [LARGE SCALE GENOMIC DNA]</scope>
    <source>
        <strain>cv. Columbia</strain>
    </source>
</reference>
<reference key="3">
    <citation type="journal article" date="2017" name="Plant J.">
        <title>Araport11: a complete reannotation of the Arabidopsis thaliana reference genome.</title>
        <authorList>
            <person name="Cheng C.Y."/>
            <person name="Krishnakumar V."/>
            <person name="Chan A.P."/>
            <person name="Thibaud-Nissen F."/>
            <person name="Schobel S."/>
            <person name="Town C.D."/>
        </authorList>
    </citation>
    <scope>GENOME REANNOTATION</scope>
    <source>
        <strain>cv. Columbia</strain>
    </source>
</reference>
<reference key="4">
    <citation type="journal article" date="2003" name="Science">
        <title>Empirical analysis of transcriptional activity in the Arabidopsis genome.</title>
        <authorList>
            <person name="Yamada K."/>
            <person name="Lim J."/>
            <person name="Dale J.M."/>
            <person name="Chen H."/>
            <person name="Shinn P."/>
            <person name="Palm C.J."/>
            <person name="Southwick A.M."/>
            <person name="Wu H.C."/>
            <person name="Kim C.J."/>
            <person name="Nguyen M."/>
            <person name="Pham P.K."/>
            <person name="Cheuk R.F."/>
            <person name="Karlin-Newmann G."/>
            <person name="Liu S.X."/>
            <person name="Lam B."/>
            <person name="Sakano H."/>
            <person name="Wu T."/>
            <person name="Yu G."/>
            <person name="Miranda M."/>
            <person name="Quach H.L."/>
            <person name="Tripp M."/>
            <person name="Chang C.H."/>
            <person name="Lee J.M."/>
            <person name="Toriumi M.J."/>
            <person name="Chan M.M."/>
            <person name="Tang C.C."/>
            <person name="Onodera C.S."/>
            <person name="Deng J.M."/>
            <person name="Akiyama K."/>
            <person name="Ansari Y."/>
            <person name="Arakawa T."/>
            <person name="Banh J."/>
            <person name="Banno F."/>
            <person name="Bowser L."/>
            <person name="Brooks S.Y."/>
            <person name="Carninci P."/>
            <person name="Chao Q."/>
            <person name="Choy N."/>
            <person name="Enju A."/>
            <person name="Goldsmith A.D."/>
            <person name="Gurjal M."/>
            <person name="Hansen N.F."/>
            <person name="Hayashizaki Y."/>
            <person name="Johnson-Hopson C."/>
            <person name="Hsuan V.W."/>
            <person name="Iida K."/>
            <person name="Karnes M."/>
            <person name="Khan S."/>
            <person name="Koesema E."/>
            <person name="Ishida J."/>
            <person name="Jiang P.X."/>
            <person name="Jones T."/>
            <person name="Kawai J."/>
            <person name="Kamiya A."/>
            <person name="Meyers C."/>
            <person name="Nakajima M."/>
            <person name="Narusaka M."/>
            <person name="Seki M."/>
            <person name="Sakurai T."/>
            <person name="Satou M."/>
            <person name="Tamse R."/>
            <person name="Vaysberg M."/>
            <person name="Wallender E.K."/>
            <person name="Wong C."/>
            <person name="Yamamura Y."/>
            <person name="Yuan S."/>
            <person name="Shinozaki K."/>
            <person name="Davis R.W."/>
            <person name="Theologis A."/>
            <person name="Ecker J.R."/>
        </authorList>
    </citation>
    <scope>NUCLEOTIDE SEQUENCE [LARGE SCALE MRNA]</scope>
    <source>
        <strain>cv. Columbia</strain>
    </source>
</reference>
<reference key="5">
    <citation type="journal article" date="2004" name="Plant Physiol.">
        <title>Immunophilins and parvulins. Superfamily of peptidyl prolyl isomerases in Arabidopsis.</title>
        <authorList>
            <person name="He Z."/>
            <person name="Li L."/>
            <person name="Luan S."/>
        </authorList>
    </citation>
    <scope>GENE FAMILY</scope>
    <scope>NOMENCLATURE</scope>
</reference>